<reference key="1">
    <citation type="journal article" date="2004" name="Nat. Genet.">
        <title>Comparison of genome degradation in Paratyphi A and Typhi, human-restricted serovars of Salmonella enterica that cause typhoid.</title>
        <authorList>
            <person name="McClelland M."/>
            <person name="Sanderson K.E."/>
            <person name="Clifton S.W."/>
            <person name="Latreille P."/>
            <person name="Porwollik S."/>
            <person name="Sabo A."/>
            <person name="Meyer R."/>
            <person name="Bieri T."/>
            <person name="Ozersky P."/>
            <person name="McLellan M."/>
            <person name="Harkins C.R."/>
            <person name="Wang C."/>
            <person name="Nguyen C."/>
            <person name="Berghoff A."/>
            <person name="Elliott G."/>
            <person name="Kohlberg S."/>
            <person name="Strong C."/>
            <person name="Du F."/>
            <person name="Carter J."/>
            <person name="Kremizki C."/>
            <person name="Layman D."/>
            <person name="Leonard S."/>
            <person name="Sun H."/>
            <person name="Fulton L."/>
            <person name="Nash W."/>
            <person name="Miner T."/>
            <person name="Minx P."/>
            <person name="Delehaunty K."/>
            <person name="Fronick C."/>
            <person name="Magrini V."/>
            <person name="Nhan M."/>
            <person name="Warren W."/>
            <person name="Florea L."/>
            <person name="Spieth J."/>
            <person name="Wilson R.K."/>
        </authorList>
    </citation>
    <scope>NUCLEOTIDE SEQUENCE [LARGE SCALE GENOMIC DNA]</scope>
    <source>
        <strain>ATCC 9150 / SARB42</strain>
    </source>
</reference>
<feature type="chain" id="PRO_0000257639" description="Dual-action ribosomal maturation protein DarP">
    <location>
        <begin position="1"/>
        <end position="183"/>
    </location>
</feature>
<dbReference type="EMBL" id="CP000026">
    <property type="protein sequence ID" value="AAV79972.1"/>
    <property type="molecule type" value="Genomic_DNA"/>
</dbReference>
<dbReference type="SMR" id="Q5PJ90"/>
<dbReference type="KEGG" id="spt:SPA4237"/>
<dbReference type="HOGENOM" id="CLU_106757_2_0_6"/>
<dbReference type="Proteomes" id="UP000008185">
    <property type="component" value="Chromosome"/>
</dbReference>
<dbReference type="GO" id="GO:0005829">
    <property type="term" value="C:cytosol"/>
    <property type="evidence" value="ECO:0007669"/>
    <property type="project" value="TreeGrafter"/>
</dbReference>
<dbReference type="GO" id="GO:0043022">
    <property type="term" value="F:ribosome binding"/>
    <property type="evidence" value="ECO:0007669"/>
    <property type="project" value="UniProtKB-UniRule"/>
</dbReference>
<dbReference type="GO" id="GO:0019843">
    <property type="term" value="F:rRNA binding"/>
    <property type="evidence" value="ECO:0007669"/>
    <property type="project" value="UniProtKB-UniRule"/>
</dbReference>
<dbReference type="GO" id="GO:1902626">
    <property type="term" value="P:assembly of large subunit precursor of preribosome"/>
    <property type="evidence" value="ECO:0007669"/>
    <property type="project" value="UniProtKB-UniRule"/>
</dbReference>
<dbReference type="CDD" id="cd16331">
    <property type="entry name" value="YjgA-like"/>
    <property type="match status" value="1"/>
</dbReference>
<dbReference type="FunFam" id="1.10.60.30:FF:000001">
    <property type="entry name" value="UPF0307 protein YjgA"/>
    <property type="match status" value="1"/>
</dbReference>
<dbReference type="FunFam" id="1.10.60.30:FF:000002">
    <property type="entry name" value="UPF0307 protein YjgA"/>
    <property type="match status" value="1"/>
</dbReference>
<dbReference type="Gene3D" id="1.10.60.30">
    <property type="entry name" value="PSPTO4464-like domains"/>
    <property type="match status" value="2"/>
</dbReference>
<dbReference type="HAMAP" id="MF_00765">
    <property type="entry name" value="DarP"/>
    <property type="match status" value="1"/>
</dbReference>
<dbReference type="InterPro" id="IPR006839">
    <property type="entry name" value="DarP"/>
</dbReference>
<dbReference type="InterPro" id="IPR023153">
    <property type="entry name" value="DarP_sf"/>
</dbReference>
<dbReference type="NCBIfam" id="NF003593">
    <property type="entry name" value="PRK05255.1-1"/>
    <property type="match status" value="1"/>
</dbReference>
<dbReference type="PANTHER" id="PTHR38101">
    <property type="entry name" value="UPF0307 PROTEIN YJGA"/>
    <property type="match status" value="1"/>
</dbReference>
<dbReference type="PANTHER" id="PTHR38101:SF1">
    <property type="entry name" value="UPF0307 PROTEIN YJGA"/>
    <property type="match status" value="1"/>
</dbReference>
<dbReference type="Pfam" id="PF04751">
    <property type="entry name" value="DarP"/>
    <property type="match status" value="1"/>
</dbReference>
<dbReference type="PIRSF" id="PIRSF016183">
    <property type="entry name" value="UCP016183"/>
    <property type="match status" value="1"/>
</dbReference>
<dbReference type="SUPFAM" id="SSF158710">
    <property type="entry name" value="PSPTO4464-like"/>
    <property type="match status" value="1"/>
</dbReference>
<keyword id="KW-0963">Cytoplasm</keyword>
<keyword id="KW-0690">Ribosome biogenesis</keyword>
<keyword id="KW-0694">RNA-binding</keyword>
<keyword id="KW-0699">rRNA-binding</keyword>
<comment type="function">
    <text evidence="1">Member of a network of 50S ribosomal subunit biogenesis factors which assembles along the 30S-50S interface, preventing incorrect 23S rRNA structures from forming. Promotes peptidyl transferase center (PTC) maturation.</text>
</comment>
<comment type="subcellular location">
    <subcellularLocation>
        <location evidence="1">Cytoplasm</location>
    </subcellularLocation>
    <text evidence="1">Associates with late stage pre-50S ribosomal subunits.</text>
</comment>
<comment type="similarity">
    <text evidence="1">Belongs to the DarP family.</text>
</comment>
<organism>
    <name type="scientific">Salmonella paratyphi A (strain ATCC 9150 / SARB42)</name>
    <dbReference type="NCBI Taxonomy" id="295319"/>
    <lineage>
        <taxon>Bacteria</taxon>
        <taxon>Pseudomonadati</taxon>
        <taxon>Pseudomonadota</taxon>
        <taxon>Gammaproteobacteria</taxon>
        <taxon>Enterobacterales</taxon>
        <taxon>Enterobacteriaceae</taxon>
        <taxon>Salmonella</taxon>
    </lineage>
</organism>
<sequence length="183" mass="21422">MTKQPEDWLDDVPGDDIEDEDDEIIWVSKSEIKRDAEELKRLGAELVDLGKNALDKIPLDTDLRDAIELAQRIKMEGRRRQLQLIGKMLRQRDVEPIRQALDKLKNRHNQQVVLFHKLEHLRDRLIVEGDDAVAEVLTLWPHADRQQLRSLIRNAKKEKEGNKPPKSARQIFQYLRELAENEG</sequence>
<protein>
    <recommendedName>
        <fullName evidence="1">Dual-action ribosomal maturation protein DarP</fullName>
    </recommendedName>
    <alternativeName>
        <fullName evidence="1">Large ribosomal subunit assembly factor DarP</fullName>
    </alternativeName>
</protein>
<gene>
    <name evidence="1" type="primary">darP</name>
    <name type="ordered locus">SPA4237</name>
</gene>
<evidence type="ECO:0000255" key="1">
    <source>
        <dbReference type="HAMAP-Rule" id="MF_00765"/>
    </source>
</evidence>
<name>DARP_SALPA</name>
<proteinExistence type="inferred from homology"/>
<accession>Q5PJ90</accession>